<comment type="function">
    <text evidence="1">Specifically catalyzes the N1-methylation of pseudouridine at position 54 (Psi54) in tRNAs.</text>
</comment>
<comment type="catalytic activity">
    <reaction evidence="1">
        <text>pseudouridine(54) in tRNA + S-adenosyl-L-methionine = N(1)-methylpseudouridine(54) in tRNA + S-adenosyl-L-homocysteine + H(+)</text>
        <dbReference type="Rhea" id="RHEA:55292"/>
        <dbReference type="Rhea" id="RHEA-COMP:14140"/>
        <dbReference type="Rhea" id="RHEA-COMP:14141"/>
        <dbReference type="ChEBI" id="CHEBI:15378"/>
        <dbReference type="ChEBI" id="CHEBI:57856"/>
        <dbReference type="ChEBI" id="CHEBI:59789"/>
        <dbReference type="ChEBI" id="CHEBI:65314"/>
        <dbReference type="ChEBI" id="CHEBI:74890"/>
        <dbReference type="EC" id="2.1.1.257"/>
    </reaction>
</comment>
<comment type="subunit">
    <text evidence="1">Homodimer.</text>
</comment>
<comment type="subcellular location">
    <subcellularLocation>
        <location evidence="1">Cytoplasm</location>
    </subcellularLocation>
</comment>
<comment type="similarity">
    <text evidence="1">Belongs to the methyltransferase superfamily. TrmY family.</text>
</comment>
<proteinExistence type="inferred from homology"/>
<sequence>MLRFAVIGHKAVSTPDFSLNDMPGGAGRMDVLCRCINASFFLSHDLRRDTECFLILKGGEQADPANTVTLRFSGEKIKSLNPDERSAGALIKKALVTIPEEEYQRAAPGISIRKSGLAKLLEEHPFAVLDENGEDIRTAETLPENFILSDHQNFTEEEMELIKDLPKYSVGPRVLHADHTIIIILNEFDRRGEQA</sequence>
<reference key="1">
    <citation type="journal article" date="2009" name="Stand. Genomic Sci.">
        <title>Complete genome sequence of Methanocorpusculum labreanum type strain Z.</title>
        <authorList>
            <person name="Anderson I.J."/>
            <person name="Sieprawska-Lupa M."/>
            <person name="Goltsman E."/>
            <person name="Lapidus A."/>
            <person name="Copeland A."/>
            <person name="Glavina Del Rio T."/>
            <person name="Tice H."/>
            <person name="Dalin E."/>
            <person name="Barry K."/>
            <person name="Pitluck S."/>
            <person name="Hauser L."/>
            <person name="Land M."/>
            <person name="Lucas S."/>
            <person name="Richardson P."/>
            <person name="Whitman W.B."/>
            <person name="Kyrpides N.C."/>
        </authorList>
    </citation>
    <scope>NUCLEOTIDE SEQUENCE [LARGE SCALE GENOMIC DNA]</scope>
    <source>
        <strain>ATCC 43576 / DSM 4855 / Z</strain>
    </source>
</reference>
<protein>
    <recommendedName>
        <fullName evidence="1">tRNA (pseudouridine(54)-N(1))-methyltransferase</fullName>
        <ecNumber evidence="1">2.1.1.257</ecNumber>
    </recommendedName>
</protein>
<organism>
    <name type="scientific">Methanocorpusculum labreanum (strain ATCC 43576 / DSM 4855 / Z)</name>
    <dbReference type="NCBI Taxonomy" id="410358"/>
    <lineage>
        <taxon>Archaea</taxon>
        <taxon>Methanobacteriati</taxon>
        <taxon>Methanobacteriota</taxon>
        <taxon>Stenosarchaea group</taxon>
        <taxon>Methanomicrobia</taxon>
        <taxon>Methanomicrobiales</taxon>
        <taxon>Methanocorpusculaceae</taxon>
        <taxon>Methanocorpusculum</taxon>
    </lineage>
</organism>
<keyword id="KW-0963">Cytoplasm</keyword>
<keyword id="KW-0489">Methyltransferase</keyword>
<keyword id="KW-1185">Reference proteome</keyword>
<keyword id="KW-0949">S-adenosyl-L-methionine</keyword>
<keyword id="KW-0808">Transferase</keyword>
<keyword id="KW-0819">tRNA processing</keyword>
<gene>
    <name evidence="1" type="primary">trmY</name>
    <name type="ordered locus">Mlab_1566</name>
</gene>
<feature type="chain" id="PRO_1000025467" description="tRNA (pseudouridine(54)-N(1))-methyltransferase">
    <location>
        <begin position="1"/>
        <end position="195"/>
    </location>
</feature>
<feature type="binding site" evidence="1">
    <location>
        <position position="129"/>
    </location>
    <ligand>
        <name>S-adenosyl-L-methionine</name>
        <dbReference type="ChEBI" id="CHEBI:59789"/>
    </ligand>
</feature>
<accession>A2STS4</accession>
<evidence type="ECO:0000255" key="1">
    <source>
        <dbReference type="HAMAP-Rule" id="MF_00587"/>
    </source>
</evidence>
<name>TRMY_METLZ</name>
<dbReference type="EC" id="2.1.1.257" evidence="1"/>
<dbReference type="EMBL" id="CP000559">
    <property type="protein sequence ID" value="ABN07730.1"/>
    <property type="molecule type" value="Genomic_DNA"/>
</dbReference>
<dbReference type="RefSeq" id="WP_011833933.1">
    <property type="nucleotide sequence ID" value="NC_008942.1"/>
</dbReference>
<dbReference type="SMR" id="A2STS4"/>
<dbReference type="STRING" id="410358.Mlab_1566"/>
<dbReference type="GeneID" id="4795980"/>
<dbReference type="KEGG" id="mla:Mlab_1566"/>
<dbReference type="eggNOG" id="arCOG01239">
    <property type="taxonomic scope" value="Archaea"/>
</dbReference>
<dbReference type="HOGENOM" id="CLU_107018_0_0_2"/>
<dbReference type="OrthoDB" id="27492at2157"/>
<dbReference type="Proteomes" id="UP000000365">
    <property type="component" value="Chromosome"/>
</dbReference>
<dbReference type="GO" id="GO:0005737">
    <property type="term" value="C:cytoplasm"/>
    <property type="evidence" value="ECO:0007669"/>
    <property type="project" value="UniProtKB-SubCell"/>
</dbReference>
<dbReference type="GO" id="GO:0008757">
    <property type="term" value="F:S-adenosylmethionine-dependent methyltransferase activity"/>
    <property type="evidence" value="ECO:0007669"/>
    <property type="project" value="UniProtKB-UniRule"/>
</dbReference>
<dbReference type="GO" id="GO:0008175">
    <property type="term" value="F:tRNA methyltransferase activity"/>
    <property type="evidence" value="ECO:0007669"/>
    <property type="project" value="UniProtKB-UniRule"/>
</dbReference>
<dbReference type="GO" id="GO:0030488">
    <property type="term" value="P:tRNA methylation"/>
    <property type="evidence" value="ECO:0007669"/>
    <property type="project" value="UniProtKB-UniRule"/>
</dbReference>
<dbReference type="CDD" id="cd18087">
    <property type="entry name" value="TrmY-like"/>
    <property type="match status" value="1"/>
</dbReference>
<dbReference type="Gene3D" id="3.40.1280.10">
    <property type="match status" value="1"/>
</dbReference>
<dbReference type="HAMAP" id="MF_00587">
    <property type="entry name" value="tRNA_methyltr_TrmY"/>
    <property type="match status" value="1"/>
</dbReference>
<dbReference type="InterPro" id="IPR029028">
    <property type="entry name" value="Alpha/beta_knot_MTases"/>
</dbReference>
<dbReference type="InterPro" id="IPR007158">
    <property type="entry name" value="TrmY"/>
</dbReference>
<dbReference type="InterPro" id="IPR029026">
    <property type="entry name" value="tRNA_m1G_MTases_N"/>
</dbReference>
<dbReference type="NCBIfam" id="NF002560">
    <property type="entry name" value="PRK02135.1"/>
    <property type="match status" value="1"/>
</dbReference>
<dbReference type="PANTHER" id="PTHR40703">
    <property type="entry name" value="TRNA (PSEUDOURIDINE(54)-N(1))-METHYLTRANSFERASE"/>
    <property type="match status" value="1"/>
</dbReference>
<dbReference type="PANTHER" id="PTHR40703:SF1">
    <property type="entry name" value="TRNA (PSEUDOURIDINE(54)-N(1))-METHYLTRANSFERASE"/>
    <property type="match status" value="1"/>
</dbReference>
<dbReference type="Pfam" id="PF04013">
    <property type="entry name" value="Methyltrn_RNA_2"/>
    <property type="match status" value="1"/>
</dbReference>
<dbReference type="SUPFAM" id="SSF75217">
    <property type="entry name" value="alpha/beta knot"/>
    <property type="match status" value="1"/>
</dbReference>